<evidence type="ECO:0000255" key="1">
    <source>
        <dbReference type="HAMAP-Rule" id="MF_01085"/>
    </source>
</evidence>
<evidence type="ECO:0000256" key="2">
    <source>
        <dbReference type="SAM" id="MobiDB-lite"/>
    </source>
</evidence>
<accession>A9MQ55</accession>
<sequence length="353" mass="39406">MSEPLKPRIDFAEPLKEESTSTFKAQQTFSEVESRTFSPAAIDEYPEDEGTAEAAVDAALQPKRSLWRKMVLGGLALFGASVVGQGIQWTMNAWQTQDWAALGGCAAGALIIGAGVGSVITEWRRLWRLRQRAHERDEARELLHSHSVGKGRAYCEKLAQQAGIDQSHPALQRWYAAIHETQNDREIVGLYAHLVQPVLDAQARREVSRFAAESTLMIAVSPLALVDMAFIAWRNLRLINRIAALYGIELGYYSRLRLFRLVLLNIAFAGASELVREVGMDWMSQDLAARLSTRAAQGIGAGLLTARLGIKTMELCRPLPWFDDDKPRLGDFRRQLIGQLKETLQKNKPTPEK</sequence>
<keyword id="KW-0997">Cell inner membrane</keyword>
<keyword id="KW-1003">Cell membrane</keyword>
<keyword id="KW-0472">Membrane</keyword>
<keyword id="KW-1185">Reference proteome</keyword>
<keyword id="KW-0812">Transmembrane</keyword>
<keyword id="KW-1133">Transmembrane helix</keyword>
<feature type="chain" id="PRO_1000084780" description="UPF0283 membrane protein YcjF">
    <location>
        <begin position="1"/>
        <end position="353"/>
    </location>
</feature>
<feature type="transmembrane region" description="Helical" evidence="1">
    <location>
        <begin position="70"/>
        <end position="90"/>
    </location>
</feature>
<feature type="transmembrane region" description="Helical" evidence="1">
    <location>
        <begin position="100"/>
        <end position="120"/>
    </location>
</feature>
<feature type="transmembrane region" description="Helical" evidence="1">
    <location>
        <begin position="213"/>
        <end position="233"/>
    </location>
</feature>
<feature type="region of interest" description="Disordered" evidence="2">
    <location>
        <begin position="1"/>
        <end position="29"/>
    </location>
</feature>
<feature type="compositionally biased region" description="Basic and acidic residues" evidence="2">
    <location>
        <begin position="1"/>
        <end position="19"/>
    </location>
</feature>
<feature type="compositionally biased region" description="Polar residues" evidence="2">
    <location>
        <begin position="20"/>
        <end position="29"/>
    </location>
</feature>
<comment type="subcellular location">
    <subcellularLocation>
        <location evidence="1">Cell inner membrane</location>
        <topology evidence="1">Multi-pass membrane protein</topology>
    </subcellularLocation>
</comment>
<comment type="similarity">
    <text evidence="1">Belongs to the UPF0283 family.</text>
</comment>
<name>YCJF_SALAR</name>
<gene>
    <name evidence="1" type="primary">ycjF</name>
    <name type="ordered locus">SARI_01297</name>
</gene>
<dbReference type="EMBL" id="CP000880">
    <property type="protein sequence ID" value="ABX21199.1"/>
    <property type="molecule type" value="Genomic_DNA"/>
</dbReference>
<dbReference type="STRING" id="41514.SARI_01297"/>
<dbReference type="KEGG" id="ses:SARI_01297"/>
<dbReference type="HOGENOM" id="CLU_057693_2_0_6"/>
<dbReference type="Proteomes" id="UP000002084">
    <property type="component" value="Chromosome"/>
</dbReference>
<dbReference type="GO" id="GO:0005886">
    <property type="term" value="C:plasma membrane"/>
    <property type="evidence" value="ECO:0007669"/>
    <property type="project" value="UniProtKB-SubCell"/>
</dbReference>
<dbReference type="HAMAP" id="MF_01085">
    <property type="entry name" value="UPF0283"/>
    <property type="match status" value="1"/>
</dbReference>
<dbReference type="InterPro" id="IPR021147">
    <property type="entry name" value="DUF697"/>
</dbReference>
<dbReference type="InterPro" id="IPR006507">
    <property type="entry name" value="UPF0283"/>
</dbReference>
<dbReference type="NCBIfam" id="TIGR01620">
    <property type="entry name" value="hyp_HI0043"/>
    <property type="match status" value="1"/>
</dbReference>
<dbReference type="PANTHER" id="PTHR39342">
    <property type="entry name" value="UPF0283 MEMBRANE PROTEIN YCJF"/>
    <property type="match status" value="1"/>
</dbReference>
<dbReference type="PANTHER" id="PTHR39342:SF1">
    <property type="entry name" value="UPF0283 MEMBRANE PROTEIN YCJF"/>
    <property type="match status" value="1"/>
</dbReference>
<dbReference type="Pfam" id="PF05128">
    <property type="entry name" value="DUF697"/>
    <property type="match status" value="1"/>
</dbReference>
<organism>
    <name type="scientific">Salmonella arizonae (strain ATCC BAA-731 / CDC346-86 / RSK2980)</name>
    <dbReference type="NCBI Taxonomy" id="41514"/>
    <lineage>
        <taxon>Bacteria</taxon>
        <taxon>Pseudomonadati</taxon>
        <taxon>Pseudomonadota</taxon>
        <taxon>Gammaproteobacteria</taxon>
        <taxon>Enterobacterales</taxon>
        <taxon>Enterobacteriaceae</taxon>
        <taxon>Salmonella</taxon>
    </lineage>
</organism>
<protein>
    <recommendedName>
        <fullName evidence="1">UPF0283 membrane protein YcjF</fullName>
    </recommendedName>
</protein>
<proteinExistence type="inferred from homology"/>
<reference key="1">
    <citation type="submission" date="2007-11" db="EMBL/GenBank/DDBJ databases">
        <authorList>
            <consortium name="The Salmonella enterica serovar Arizonae Genome Sequencing Project"/>
            <person name="McClelland M."/>
            <person name="Sanderson E.K."/>
            <person name="Porwollik S."/>
            <person name="Spieth J."/>
            <person name="Clifton W.S."/>
            <person name="Fulton R."/>
            <person name="Chunyan W."/>
            <person name="Wollam A."/>
            <person name="Shah N."/>
            <person name="Pepin K."/>
            <person name="Bhonagiri V."/>
            <person name="Nash W."/>
            <person name="Johnson M."/>
            <person name="Thiruvilangam P."/>
            <person name="Wilson R."/>
        </authorList>
    </citation>
    <scope>NUCLEOTIDE SEQUENCE [LARGE SCALE GENOMIC DNA]</scope>
    <source>
        <strain>ATCC BAA-731 / CDC346-86 / RSK2980</strain>
    </source>
</reference>